<evidence type="ECO:0000269" key="1">
    <source>
    </source>
</evidence>
<evidence type="ECO:0000303" key="2">
    <source>
    </source>
</evidence>
<evidence type="ECO:0000305" key="3"/>
<name>TRP3_EUSSE</name>
<proteinExistence type="evidence at protein level"/>
<accession>P86571</accession>
<organism>
    <name type="scientific">Euschistus servus</name>
    <name type="common">Brown stink bug</name>
    <dbReference type="NCBI Taxonomy" id="756488"/>
    <lineage>
        <taxon>Eukaryota</taxon>
        <taxon>Metazoa</taxon>
        <taxon>Ecdysozoa</taxon>
        <taxon>Arthropoda</taxon>
        <taxon>Hexapoda</taxon>
        <taxon>Insecta</taxon>
        <taxon>Pterygota</taxon>
        <taxon>Neoptera</taxon>
        <taxon>Paraneoptera</taxon>
        <taxon>Hemiptera</taxon>
        <taxon>Heteroptera</taxon>
        <taxon>Panheteroptera</taxon>
        <taxon>Pentatomomorpha</taxon>
        <taxon>Pentatomoidea</taxon>
        <taxon>Pentatomidae</taxon>
        <taxon>Pentatominae</taxon>
        <taxon>Euschistus</taxon>
    </lineage>
</organism>
<keyword id="KW-0027">Amidation</keyword>
<keyword id="KW-0903">Direct protein sequencing</keyword>
<keyword id="KW-0527">Neuropeptide</keyword>
<keyword id="KW-0964">Secreted</keyword>
<feature type="peptide" id="PRO_0000395640" description="Tachykinin-related peptide 3" evidence="1">
    <location>
        <begin position="1"/>
        <end position="10"/>
    </location>
</feature>
<feature type="modified residue" description="Arginine amide" evidence="1">
    <location>
        <position position="10"/>
    </location>
</feature>
<dbReference type="GO" id="GO:0005576">
    <property type="term" value="C:extracellular region"/>
    <property type="evidence" value="ECO:0007005"/>
    <property type="project" value="UniProtKB"/>
</dbReference>
<dbReference type="GO" id="GO:0007218">
    <property type="term" value="P:neuropeptide signaling pathway"/>
    <property type="evidence" value="ECO:0007669"/>
    <property type="project" value="UniProtKB-KW"/>
</dbReference>
<sequence length="10" mass="1042">GPSSGFFGMR</sequence>
<protein>
    <recommendedName>
        <fullName evidence="2">Tachykinin-related peptide 3</fullName>
        <shortName evidence="2">TKRP-3</shortName>
    </recommendedName>
</protein>
<reference evidence="3" key="1">
    <citation type="journal article" date="2009" name="Peptides">
        <title>Neuropeptides in Heteroptera: identification of allatotropin-related peptide and tachykinin-related peptides using MALDI-TOF mass spectrometry.</title>
        <authorList>
            <person name="Neupert S."/>
            <person name="Russell W.K."/>
            <person name="Russell D.H."/>
            <person name="Lopez J.D. Jr."/>
            <person name="Predel R."/>
            <person name="Nachman R.J."/>
        </authorList>
    </citation>
    <scope>PROTEIN SEQUENCE</scope>
    <scope>SUBCELLULAR LOCATION</scope>
    <scope>TISSUE SPECIFICITY</scope>
    <scope>AMIDATION AT ARG-10</scope>
    <source>
        <tissue evidence="1">Antennal lobe</tissue>
    </source>
</reference>
<comment type="subcellular location">
    <subcellularLocation>
        <location evidence="1 3">Secreted</location>
    </subcellularLocation>
</comment>
<comment type="tissue specificity">
    <text evidence="1">Expressed in the antennal lobe (at protein level).</text>
</comment>